<feature type="chain" id="PRO_1000060434" description="Glycogen synthase">
    <location>
        <begin position="1"/>
        <end position="477"/>
    </location>
</feature>
<feature type="binding site" evidence="1">
    <location>
        <position position="15"/>
    </location>
    <ligand>
        <name>ADP-alpha-D-glucose</name>
        <dbReference type="ChEBI" id="CHEBI:57498"/>
    </ligand>
</feature>
<sequence length="477" mass="52567">MQVLHVCSEMFPLLKTGGLADVVGALPAAQIAEGGDVRVLLPAFPDVRNGIPDSVLVAEIDSFAGRVGLRYGTYHGVGIYLIDAPWLYERPGSPYHDQSMNAYSDNHRRFALLGWMACELAKGLDRYWRPQVVHAHDWHAGLACAYLAANGHPARSVFTVHNLAYQGLFSAHHVPELWLPPSFFNIYGLEFYGQMSFLKAGLFYADHITAVSPTYAREITRPEFGYGMEGLLQERQRQGRLSGILNGVDDKIWDPSHDPRLTARYDADNLKNKAKNKLHLQKAMGLKVDESLPLFAVVSRLTSQKGLDLVLEALPALLEQGGQLALLGAGDAVLQQAFLAAAADYPEQVGVQIGYHEAFSHRIIGGADVIMVPSRFEPCGLTQLYGLKYGTLPLVRRTGGLADTVVDCALENLADGSASGFVFDDCDAVALGNAIRRAMVLWSRPKHWRHVQRHAMSVDFGWQVAAQEYLSLYQRLS</sequence>
<gene>
    <name evidence="1" type="primary">glgA</name>
    <name type="ordered locus">Spro_4644</name>
</gene>
<comment type="function">
    <text evidence="1">Synthesizes alpha-1,4-glucan chains using ADP-glucose.</text>
</comment>
<comment type="catalytic activity">
    <reaction evidence="1">
        <text>[(1-&gt;4)-alpha-D-glucosyl](n) + ADP-alpha-D-glucose = [(1-&gt;4)-alpha-D-glucosyl](n+1) + ADP + H(+)</text>
        <dbReference type="Rhea" id="RHEA:18189"/>
        <dbReference type="Rhea" id="RHEA-COMP:9584"/>
        <dbReference type="Rhea" id="RHEA-COMP:9587"/>
        <dbReference type="ChEBI" id="CHEBI:15378"/>
        <dbReference type="ChEBI" id="CHEBI:15444"/>
        <dbReference type="ChEBI" id="CHEBI:57498"/>
        <dbReference type="ChEBI" id="CHEBI:456216"/>
        <dbReference type="EC" id="2.4.1.21"/>
    </reaction>
</comment>
<comment type="pathway">
    <text evidence="1">Glycan biosynthesis; glycogen biosynthesis.</text>
</comment>
<comment type="similarity">
    <text evidence="1">Belongs to the glycosyltransferase 1 family. Bacterial/plant glycogen synthase subfamily.</text>
</comment>
<dbReference type="EC" id="2.4.1.21" evidence="1"/>
<dbReference type="EMBL" id="CP000826">
    <property type="protein sequence ID" value="ABV43737.1"/>
    <property type="molecule type" value="Genomic_DNA"/>
</dbReference>
<dbReference type="SMR" id="A8GKU7"/>
<dbReference type="STRING" id="399741.Spro_4644"/>
<dbReference type="CAZy" id="GT5">
    <property type="family name" value="Glycosyltransferase Family 5"/>
</dbReference>
<dbReference type="KEGG" id="spe:Spro_4644"/>
<dbReference type="eggNOG" id="COG0297">
    <property type="taxonomic scope" value="Bacteria"/>
</dbReference>
<dbReference type="HOGENOM" id="CLU_009583_18_4_6"/>
<dbReference type="OrthoDB" id="9808590at2"/>
<dbReference type="UniPathway" id="UPA00164"/>
<dbReference type="GO" id="GO:0005829">
    <property type="term" value="C:cytosol"/>
    <property type="evidence" value="ECO:0007669"/>
    <property type="project" value="TreeGrafter"/>
</dbReference>
<dbReference type="GO" id="GO:0009011">
    <property type="term" value="F:alpha-1,4-glucan glucosyltransferase (ADP-glucose donor) activity"/>
    <property type="evidence" value="ECO:0007669"/>
    <property type="project" value="UniProtKB-UniRule"/>
</dbReference>
<dbReference type="GO" id="GO:0004373">
    <property type="term" value="F:alpha-1,4-glucan glucosyltransferase (UDP-glucose donor) activity"/>
    <property type="evidence" value="ECO:0007669"/>
    <property type="project" value="InterPro"/>
</dbReference>
<dbReference type="GO" id="GO:0005978">
    <property type="term" value="P:glycogen biosynthetic process"/>
    <property type="evidence" value="ECO:0007669"/>
    <property type="project" value="UniProtKB-UniRule"/>
</dbReference>
<dbReference type="CDD" id="cd03791">
    <property type="entry name" value="GT5_Glycogen_synthase_DULL1-like"/>
    <property type="match status" value="1"/>
</dbReference>
<dbReference type="FunFam" id="3.40.50.2000:FF:000008">
    <property type="entry name" value="Glycogen synthase"/>
    <property type="match status" value="1"/>
</dbReference>
<dbReference type="FunFam" id="3.40.50.2000:FF:000011">
    <property type="entry name" value="Glycogen synthase"/>
    <property type="match status" value="1"/>
</dbReference>
<dbReference type="Gene3D" id="3.40.50.2000">
    <property type="entry name" value="Glycogen Phosphorylase B"/>
    <property type="match status" value="2"/>
</dbReference>
<dbReference type="HAMAP" id="MF_00484">
    <property type="entry name" value="Glycogen_synth"/>
    <property type="match status" value="1"/>
</dbReference>
<dbReference type="InterPro" id="IPR001296">
    <property type="entry name" value="Glyco_trans_1"/>
</dbReference>
<dbReference type="InterPro" id="IPR011835">
    <property type="entry name" value="GS/SS"/>
</dbReference>
<dbReference type="InterPro" id="IPR013534">
    <property type="entry name" value="Starch_synth_cat_dom"/>
</dbReference>
<dbReference type="NCBIfam" id="TIGR02095">
    <property type="entry name" value="glgA"/>
    <property type="match status" value="1"/>
</dbReference>
<dbReference type="NCBIfam" id="NF001899">
    <property type="entry name" value="PRK00654.1-2"/>
    <property type="match status" value="1"/>
</dbReference>
<dbReference type="PANTHER" id="PTHR45825:SF11">
    <property type="entry name" value="ALPHA AMYLASE DOMAIN-CONTAINING PROTEIN"/>
    <property type="match status" value="1"/>
</dbReference>
<dbReference type="PANTHER" id="PTHR45825">
    <property type="entry name" value="GRANULE-BOUND STARCH SYNTHASE 1, CHLOROPLASTIC/AMYLOPLASTIC"/>
    <property type="match status" value="1"/>
</dbReference>
<dbReference type="Pfam" id="PF08323">
    <property type="entry name" value="Glyco_transf_5"/>
    <property type="match status" value="1"/>
</dbReference>
<dbReference type="Pfam" id="PF00534">
    <property type="entry name" value="Glycos_transf_1"/>
    <property type="match status" value="1"/>
</dbReference>
<dbReference type="SUPFAM" id="SSF53756">
    <property type="entry name" value="UDP-Glycosyltransferase/glycogen phosphorylase"/>
    <property type="match status" value="1"/>
</dbReference>
<proteinExistence type="inferred from homology"/>
<reference key="1">
    <citation type="submission" date="2007-09" db="EMBL/GenBank/DDBJ databases">
        <title>Complete sequence of chromosome of Serratia proteamaculans 568.</title>
        <authorList>
            <consortium name="US DOE Joint Genome Institute"/>
            <person name="Copeland A."/>
            <person name="Lucas S."/>
            <person name="Lapidus A."/>
            <person name="Barry K."/>
            <person name="Glavina del Rio T."/>
            <person name="Dalin E."/>
            <person name="Tice H."/>
            <person name="Pitluck S."/>
            <person name="Chain P."/>
            <person name="Malfatti S."/>
            <person name="Shin M."/>
            <person name="Vergez L."/>
            <person name="Schmutz J."/>
            <person name="Larimer F."/>
            <person name="Land M."/>
            <person name="Hauser L."/>
            <person name="Kyrpides N."/>
            <person name="Kim E."/>
            <person name="Taghavi S."/>
            <person name="Newman L."/>
            <person name="Vangronsveld J."/>
            <person name="van der Lelie D."/>
            <person name="Richardson P."/>
        </authorList>
    </citation>
    <scope>NUCLEOTIDE SEQUENCE [LARGE SCALE GENOMIC DNA]</scope>
    <source>
        <strain>568</strain>
    </source>
</reference>
<name>GLGA_SERP5</name>
<keyword id="KW-0320">Glycogen biosynthesis</keyword>
<keyword id="KW-0328">Glycosyltransferase</keyword>
<keyword id="KW-0808">Transferase</keyword>
<accession>A8GKU7</accession>
<organism>
    <name type="scientific">Serratia proteamaculans (strain 568)</name>
    <dbReference type="NCBI Taxonomy" id="399741"/>
    <lineage>
        <taxon>Bacteria</taxon>
        <taxon>Pseudomonadati</taxon>
        <taxon>Pseudomonadota</taxon>
        <taxon>Gammaproteobacteria</taxon>
        <taxon>Enterobacterales</taxon>
        <taxon>Yersiniaceae</taxon>
        <taxon>Serratia</taxon>
    </lineage>
</organism>
<evidence type="ECO:0000255" key="1">
    <source>
        <dbReference type="HAMAP-Rule" id="MF_00484"/>
    </source>
</evidence>
<protein>
    <recommendedName>
        <fullName evidence="1">Glycogen synthase</fullName>
        <ecNumber evidence="1">2.4.1.21</ecNumber>
    </recommendedName>
    <alternativeName>
        <fullName evidence="1">Starch [bacterial glycogen] synthase</fullName>
    </alternativeName>
</protein>